<accession>B7ZTW1</accession>
<accession>A9ULA1</accession>
<keyword id="KW-0067">ATP-binding</keyword>
<keyword id="KW-0963">Cytoplasm</keyword>
<keyword id="KW-0347">Helicase</keyword>
<keyword id="KW-0378">Hydrolase</keyword>
<keyword id="KW-0507">mRNA processing</keyword>
<keyword id="KW-0508">mRNA splicing</keyword>
<keyword id="KW-0509">mRNA transport</keyword>
<keyword id="KW-0866">Nonsense-mediated mRNA decay</keyword>
<keyword id="KW-0547">Nucleotide-binding</keyword>
<keyword id="KW-0539">Nucleus</keyword>
<keyword id="KW-1185">Reference proteome</keyword>
<keyword id="KW-0694">RNA-binding</keyword>
<keyword id="KW-0747">Spliceosome</keyword>
<keyword id="KW-0810">Translation regulation</keyword>
<keyword id="KW-0813">Transport</keyword>
<proteinExistence type="evidence at transcript level"/>
<dbReference type="EC" id="3.6.4.13" evidence="1"/>
<dbReference type="EMBL" id="BC157177">
    <property type="protein sequence ID" value="AAI57178.1"/>
    <property type="molecule type" value="mRNA"/>
</dbReference>
<dbReference type="EMBL" id="BC171014">
    <property type="protein sequence ID" value="AAI71014.1"/>
    <property type="molecule type" value="mRNA"/>
</dbReference>
<dbReference type="RefSeq" id="NP_001107349.1">
    <property type="nucleotide sequence ID" value="NM_001113877.1"/>
</dbReference>
<dbReference type="SMR" id="B7ZTW1"/>
<dbReference type="FunCoup" id="B7ZTW1">
    <property type="interactions" value="3401"/>
</dbReference>
<dbReference type="STRING" id="8364.ENSXETP00000031560"/>
<dbReference type="PaxDb" id="8364-ENSXETP00000030049"/>
<dbReference type="GeneID" id="100135173"/>
<dbReference type="KEGG" id="xtr:100135173"/>
<dbReference type="AGR" id="Xenbase:XB-GENE-5773453"/>
<dbReference type="CTD" id="9775"/>
<dbReference type="Xenbase" id="XB-GENE-5773453">
    <property type="gene designation" value="eif4a3"/>
</dbReference>
<dbReference type="eggNOG" id="KOG0328">
    <property type="taxonomic scope" value="Eukaryota"/>
</dbReference>
<dbReference type="HOGENOM" id="CLU_003041_1_0_1"/>
<dbReference type="InParanoid" id="B7ZTW1"/>
<dbReference type="OrthoDB" id="10265785at2759"/>
<dbReference type="TreeFam" id="TF300466"/>
<dbReference type="Reactome" id="R-XTR-1169408">
    <property type="pathway name" value="ISG15 antiviral mechanism"/>
</dbReference>
<dbReference type="Reactome" id="R-XTR-429947">
    <property type="pathway name" value="Deadenylation of mRNA"/>
</dbReference>
<dbReference type="Reactome" id="R-XTR-72163">
    <property type="pathway name" value="mRNA Splicing - Major Pathway"/>
</dbReference>
<dbReference type="Reactome" id="R-XTR-975957">
    <property type="pathway name" value="Nonsense Mediated Decay (NMD) enhanced by the Exon Junction Complex (EJC)"/>
</dbReference>
<dbReference type="Proteomes" id="UP000008143">
    <property type="component" value="Chromosome 5"/>
</dbReference>
<dbReference type="Bgee" id="ENSXETG00000013720">
    <property type="expression patterns" value="Expressed in egg cell and 16 other cell types or tissues"/>
</dbReference>
<dbReference type="GO" id="GO:0005737">
    <property type="term" value="C:cytoplasm"/>
    <property type="evidence" value="ECO:0007669"/>
    <property type="project" value="UniProtKB-SubCell"/>
</dbReference>
<dbReference type="GO" id="GO:0016607">
    <property type="term" value="C:nuclear speck"/>
    <property type="evidence" value="ECO:0007669"/>
    <property type="project" value="UniProtKB-SubCell"/>
</dbReference>
<dbReference type="GO" id="GO:0005634">
    <property type="term" value="C:nucleus"/>
    <property type="evidence" value="ECO:0000250"/>
    <property type="project" value="UniProtKB"/>
</dbReference>
<dbReference type="GO" id="GO:0071006">
    <property type="term" value="C:U2-type catalytic step 1 spliceosome"/>
    <property type="evidence" value="ECO:0000250"/>
    <property type="project" value="UniProtKB"/>
</dbReference>
<dbReference type="GO" id="GO:0005524">
    <property type="term" value="F:ATP binding"/>
    <property type="evidence" value="ECO:0007669"/>
    <property type="project" value="UniProtKB-KW"/>
</dbReference>
<dbReference type="GO" id="GO:0016887">
    <property type="term" value="F:ATP hydrolysis activity"/>
    <property type="evidence" value="ECO:0007669"/>
    <property type="project" value="RHEA"/>
</dbReference>
<dbReference type="GO" id="GO:0003723">
    <property type="term" value="F:RNA binding"/>
    <property type="evidence" value="ECO:0007669"/>
    <property type="project" value="UniProtKB-KW"/>
</dbReference>
<dbReference type="GO" id="GO:0003724">
    <property type="term" value="F:RNA helicase activity"/>
    <property type="evidence" value="ECO:0007669"/>
    <property type="project" value="UniProtKB-EC"/>
</dbReference>
<dbReference type="GO" id="GO:0000398">
    <property type="term" value="P:mRNA splicing, via spliceosome"/>
    <property type="evidence" value="ECO:0000250"/>
    <property type="project" value="UniProtKB"/>
</dbReference>
<dbReference type="GO" id="GO:0051028">
    <property type="term" value="P:mRNA transport"/>
    <property type="evidence" value="ECO:0007669"/>
    <property type="project" value="UniProtKB-KW"/>
</dbReference>
<dbReference type="GO" id="GO:0000184">
    <property type="term" value="P:nuclear-transcribed mRNA catabolic process, nonsense-mediated decay"/>
    <property type="evidence" value="ECO:0007669"/>
    <property type="project" value="UniProtKB-KW"/>
</dbReference>
<dbReference type="GO" id="GO:0000381">
    <property type="term" value="P:regulation of alternative mRNA splicing, via spliceosome"/>
    <property type="evidence" value="ECO:0000250"/>
    <property type="project" value="UniProtKB"/>
</dbReference>
<dbReference type="GO" id="GO:0006417">
    <property type="term" value="P:regulation of translation"/>
    <property type="evidence" value="ECO:0007669"/>
    <property type="project" value="UniProtKB-KW"/>
</dbReference>
<dbReference type="CDD" id="cd18045">
    <property type="entry name" value="DEADc_EIF4AIII_DDX48"/>
    <property type="match status" value="1"/>
</dbReference>
<dbReference type="CDD" id="cd18787">
    <property type="entry name" value="SF2_C_DEAD"/>
    <property type="match status" value="1"/>
</dbReference>
<dbReference type="FunFam" id="3.40.50.300:FF:000031">
    <property type="entry name" value="Eukaryotic initiation factor 4A-III"/>
    <property type="match status" value="1"/>
</dbReference>
<dbReference type="FunFam" id="3.40.50.300:FF:000498">
    <property type="entry name" value="Eukaryotic initiation factor 4A-III"/>
    <property type="match status" value="1"/>
</dbReference>
<dbReference type="Gene3D" id="3.40.50.300">
    <property type="entry name" value="P-loop containing nucleotide triphosphate hydrolases"/>
    <property type="match status" value="2"/>
</dbReference>
<dbReference type="InterPro" id="IPR011545">
    <property type="entry name" value="DEAD/DEAH_box_helicase_dom"/>
</dbReference>
<dbReference type="InterPro" id="IPR014001">
    <property type="entry name" value="Helicase_ATP-bd"/>
</dbReference>
<dbReference type="InterPro" id="IPR001650">
    <property type="entry name" value="Helicase_C-like"/>
</dbReference>
<dbReference type="InterPro" id="IPR027417">
    <property type="entry name" value="P-loop_NTPase"/>
</dbReference>
<dbReference type="InterPro" id="IPR000629">
    <property type="entry name" value="RNA-helicase_DEAD-box_CS"/>
</dbReference>
<dbReference type="InterPro" id="IPR014014">
    <property type="entry name" value="RNA_helicase_DEAD_Q_motif"/>
</dbReference>
<dbReference type="PANTHER" id="PTHR47958">
    <property type="entry name" value="ATP-DEPENDENT RNA HELICASE DBP3"/>
    <property type="match status" value="1"/>
</dbReference>
<dbReference type="Pfam" id="PF00270">
    <property type="entry name" value="DEAD"/>
    <property type="match status" value="1"/>
</dbReference>
<dbReference type="Pfam" id="PF00271">
    <property type="entry name" value="Helicase_C"/>
    <property type="match status" value="1"/>
</dbReference>
<dbReference type="SMART" id="SM00487">
    <property type="entry name" value="DEXDc"/>
    <property type="match status" value="1"/>
</dbReference>
<dbReference type="SMART" id="SM00490">
    <property type="entry name" value="HELICc"/>
    <property type="match status" value="1"/>
</dbReference>
<dbReference type="SUPFAM" id="SSF52540">
    <property type="entry name" value="P-loop containing nucleoside triphosphate hydrolases"/>
    <property type="match status" value="1"/>
</dbReference>
<dbReference type="PROSITE" id="PS00039">
    <property type="entry name" value="DEAD_ATP_HELICASE"/>
    <property type="match status" value="1"/>
</dbReference>
<dbReference type="PROSITE" id="PS51192">
    <property type="entry name" value="HELICASE_ATP_BIND_1"/>
    <property type="match status" value="1"/>
</dbReference>
<dbReference type="PROSITE" id="PS51194">
    <property type="entry name" value="HELICASE_CTER"/>
    <property type="match status" value="1"/>
</dbReference>
<dbReference type="PROSITE" id="PS51195">
    <property type="entry name" value="Q_MOTIF"/>
    <property type="match status" value="1"/>
</dbReference>
<feature type="chain" id="PRO_0000378562" description="Eukaryotic initiation factor 4A-III">
    <location>
        <begin position="1"/>
        <end position="415"/>
    </location>
</feature>
<feature type="domain" description="Helicase ATP-binding" evidence="3">
    <location>
        <begin position="73"/>
        <end position="243"/>
    </location>
</feature>
<feature type="domain" description="Helicase C-terminal" evidence="4">
    <location>
        <begin position="254"/>
        <end position="415"/>
    </location>
</feature>
<feature type="short sequence motif" description="Q motif">
    <location>
        <begin position="42"/>
        <end position="70"/>
    </location>
</feature>
<feature type="short sequence motif" description="DEAD box" evidence="5">
    <location>
        <begin position="191"/>
        <end position="194"/>
    </location>
</feature>
<feature type="binding site" evidence="1">
    <location>
        <position position="64"/>
    </location>
    <ligand>
        <name>ATP</name>
        <dbReference type="ChEBI" id="CHEBI:30616"/>
    </ligand>
</feature>
<feature type="binding site" evidence="1">
    <location>
        <position position="69"/>
    </location>
    <ligand>
        <name>ATP</name>
        <dbReference type="ChEBI" id="CHEBI:30616"/>
    </ligand>
</feature>
<feature type="binding site" evidence="3">
    <location>
        <begin position="86"/>
        <end position="93"/>
    </location>
    <ligand>
        <name>ATP</name>
        <dbReference type="ChEBI" id="CHEBI:30616"/>
    </ligand>
</feature>
<feature type="binding site" evidence="1">
    <location>
        <begin position="89"/>
        <end position="94"/>
    </location>
    <ligand>
        <name>ATP</name>
        <dbReference type="ChEBI" id="CHEBI:30616"/>
    </ligand>
</feature>
<feature type="binding site" evidence="1">
    <location>
        <position position="346"/>
    </location>
    <ligand>
        <name>ATP</name>
        <dbReference type="ChEBI" id="CHEBI:30616"/>
    </ligand>
</feature>
<feature type="binding site" evidence="1">
    <location>
        <begin position="371"/>
        <end position="375"/>
    </location>
    <ligand>
        <name>ATP</name>
        <dbReference type="ChEBI" id="CHEBI:30616"/>
    </ligand>
</feature>
<feature type="sequence conflict" description="In Ref. 1; AAI57178." evidence="5" ref="1">
    <original>A</original>
    <variation>V</variation>
    <location>
        <position position="4"/>
    </location>
</feature>
<protein>
    <recommendedName>
        <fullName>Eukaryotic initiation factor 4A-III</fullName>
        <shortName>eIF-4A-III</shortName>
        <shortName>eIF4A-III</shortName>
        <ecNumber evidence="1">3.6.4.13</ecNumber>
    </recommendedName>
    <alternativeName>
        <fullName>ATP-dependent RNA helicase DDX48</fullName>
    </alternativeName>
    <alternativeName>
        <fullName>ATP-dependent RNA helicase eIF4A-3</fullName>
    </alternativeName>
    <alternativeName>
        <fullName>DEAD box protein 48</fullName>
    </alternativeName>
    <alternativeName>
        <fullName>Eukaryotic translation initiation factor 4A isoform 3</fullName>
    </alternativeName>
</protein>
<sequence>MAAAAVTAVAGVTSGSSRKRLLREEDMTKVEFETSEEVDVTPTFDTMGLREDLLRGIYAYGFEKPSAIQQRAIKQIIKGRDVIAQSQSGTGKTATFCVSVLQCLDIQVRETQALILAPTRELAGQIQKVLLALGDYMNVQCHACIGGTNVGEDIRKLDYGQHVVAGTPGRVFDMIRRRSLRTRAIKMLVLDEADEMLNKGFKEQIYDVYRYLPPATQVCLISATLPHEILEMTNKFMTDPIRILVKRDELTLEGIKQFFVAVEREEWKFDTLCDLYDTLTITQAVIFCNTKRKVDWLTEKMREANFTVSSMHGDMPQKERESIMKEFRSGASRVLISTDVWARGLDVPQVSLIINYDLPNNRELYIHRIGRSGRYGRKGVAINFVKNDDIRILRDIEQYYSTQIDEMPMNVADLI</sequence>
<gene>
    <name type="primary">eif4a3</name>
    <name type="synonym">ddx48</name>
</gene>
<name>IF4A3_XENTR</name>
<reference key="1">
    <citation type="submission" date="2008-12" db="EMBL/GenBank/DDBJ databases">
        <authorList>
            <consortium name="NIH - Xenopus Gene Collection (XGC) project"/>
        </authorList>
    </citation>
    <scope>NUCLEOTIDE SEQUENCE [LARGE SCALE MRNA]</scope>
    <source>
        <tissue>Embryo</tissue>
    </source>
</reference>
<evidence type="ECO:0000250" key="1">
    <source>
        <dbReference type="UniProtKB" id="P38919"/>
    </source>
</evidence>
<evidence type="ECO:0000250" key="2">
    <source>
        <dbReference type="UniProtKB" id="Q3B8Q2"/>
    </source>
</evidence>
<evidence type="ECO:0000255" key="3">
    <source>
        <dbReference type="PROSITE-ProRule" id="PRU00541"/>
    </source>
</evidence>
<evidence type="ECO:0000255" key="4">
    <source>
        <dbReference type="PROSITE-ProRule" id="PRU00542"/>
    </source>
</evidence>
<evidence type="ECO:0000305" key="5"/>
<comment type="function">
    <text evidence="1">ATP-dependent RNA helicase. Involved in pre-mRNA splicing as component of the spliceosome. Core component of the splicing-dependent multiprotein exon junction complex (EJC) deposited at splice junctions on mRNAs. The EJC is a dynamic structure consisting of core proteins and several peripheral nuclear and cytoplasmic associated factors that join the complex only transiently either during EJC assembly or during subsequent mRNA metabolism. The EJC marks the position of the exon-exon junction in the mature mRNA for the gene expression machinery and the core components remain bound to spliced mRNAs throughout all stages of mRNA metabolism thereby influencing downstream processes including nuclear mRNA export, subcellular mRNA localization, translation efficiency and nonsense-mediated mRNA decay (NMD). Binds spliced mRNA in sequence-independent manner, 20-24 nucleotides upstream of mRNA exon-exon junctions (By similarity). Involved in craniofacial development (By similarity).</text>
</comment>
<comment type="catalytic activity">
    <reaction evidence="1">
        <text>ATP + H2O = ADP + phosphate + H(+)</text>
        <dbReference type="Rhea" id="RHEA:13065"/>
        <dbReference type="ChEBI" id="CHEBI:15377"/>
        <dbReference type="ChEBI" id="CHEBI:15378"/>
        <dbReference type="ChEBI" id="CHEBI:30616"/>
        <dbReference type="ChEBI" id="CHEBI:43474"/>
        <dbReference type="ChEBI" id="CHEBI:456216"/>
        <dbReference type="EC" id="3.6.4.13"/>
    </reaction>
</comment>
<comment type="subunit">
    <text evidence="1">Identified in the spliceosome C complex. Part of the mRNA splicing-dependent exon junction complex (EJC) complex; the core complex contains casc3, eif4a3, magoh and rbm8a.</text>
</comment>
<comment type="subcellular location">
    <subcellularLocation>
        <location evidence="2">Nucleus</location>
    </subcellularLocation>
    <subcellularLocation>
        <location evidence="1">Nucleus speckle</location>
    </subcellularLocation>
    <subcellularLocation>
        <location evidence="2">Cytoplasm</location>
    </subcellularLocation>
    <text evidence="2">Nucleocytoplasmic shuttling protein. Travels to the cytoplasm as part of the exon junction complex (EJC) bound to mRNA.</text>
</comment>
<comment type="similarity">
    <text evidence="5">Belongs to the DEAD box helicase family. eIF4A subfamily.</text>
</comment>
<organism>
    <name type="scientific">Xenopus tropicalis</name>
    <name type="common">Western clawed frog</name>
    <name type="synonym">Silurana tropicalis</name>
    <dbReference type="NCBI Taxonomy" id="8364"/>
    <lineage>
        <taxon>Eukaryota</taxon>
        <taxon>Metazoa</taxon>
        <taxon>Chordata</taxon>
        <taxon>Craniata</taxon>
        <taxon>Vertebrata</taxon>
        <taxon>Euteleostomi</taxon>
        <taxon>Amphibia</taxon>
        <taxon>Batrachia</taxon>
        <taxon>Anura</taxon>
        <taxon>Pipoidea</taxon>
        <taxon>Pipidae</taxon>
        <taxon>Xenopodinae</taxon>
        <taxon>Xenopus</taxon>
        <taxon>Silurana</taxon>
    </lineage>
</organism>